<keyword id="KW-0007">Acetylation</keyword>
<keyword id="KW-0903">Direct protein sequencing</keyword>
<keyword id="KW-0349">Heme</keyword>
<keyword id="KW-0408">Iron</keyword>
<keyword id="KW-0479">Metal-binding</keyword>
<keyword id="KW-0561">Oxygen transport</keyword>
<keyword id="KW-0813">Transport</keyword>
<organism>
    <name type="scientific">Trematomus newnesi</name>
    <name type="common">Dusky notothen</name>
    <dbReference type="NCBI Taxonomy" id="35730"/>
    <lineage>
        <taxon>Eukaryota</taxon>
        <taxon>Metazoa</taxon>
        <taxon>Chordata</taxon>
        <taxon>Craniata</taxon>
        <taxon>Vertebrata</taxon>
        <taxon>Euteleostomi</taxon>
        <taxon>Actinopterygii</taxon>
        <taxon>Neopterygii</taxon>
        <taxon>Teleostei</taxon>
        <taxon>Neoteleostei</taxon>
        <taxon>Acanthomorphata</taxon>
        <taxon>Eupercaria</taxon>
        <taxon>Perciformes</taxon>
        <taxon>Notothenioidei</taxon>
        <taxon>Nototheniidae</taxon>
        <taxon>Trematomus</taxon>
    </lineage>
</organism>
<sequence>SLSTKDKETVKAFWSKVSGKTEDIGNDALSRMLVVYPQTKIYFSHWKELTPGSAPVRKHGMTVMKGVGDAVSKIEDLTAGLTELSELHAFTLRVDPGNFKILSHNILVVFAIMFPNDFTPQVHVSMDKFLAALSRALSEKYR</sequence>
<comment type="function">
    <text evidence="2">Involved in oxygen transport from gills to the various peripheral tissues.</text>
</comment>
<comment type="subunit">
    <text evidence="2">Hb2 is a heterotetramer of two alpha-2 chains and two beta chains.</text>
</comment>
<comment type="tissue specificity">
    <text>Red blood cells.</text>
</comment>
<comment type="miscellaneous">
    <text>This fish has three hemoglobins: Hb1 (major, about 65-70% of the total), Hb2 (about 5% of the total) and HbC (about 20-25% of the total). Hb1 and Hb2 display a very weak Bohr effect and no Root effect.</text>
</comment>
<comment type="similarity">
    <text evidence="1">Belongs to the globin family.</text>
</comment>
<dbReference type="PIR" id="B54403">
    <property type="entry name" value="B54403"/>
</dbReference>
<dbReference type="SMR" id="P45719"/>
<dbReference type="iPTMnet" id="P45719"/>
<dbReference type="GO" id="GO:0072562">
    <property type="term" value="C:blood microparticle"/>
    <property type="evidence" value="ECO:0007669"/>
    <property type="project" value="TreeGrafter"/>
</dbReference>
<dbReference type="GO" id="GO:0031838">
    <property type="term" value="C:haptoglobin-hemoglobin complex"/>
    <property type="evidence" value="ECO:0007669"/>
    <property type="project" value="TreeGrafter"/>
</dbReference>
<dbReference type="GO" id="GO:0005833">
    <property type="term" value="C:hemoglobin complex"/>
    <property type="evidence" value="ECO:0007669"/>
    <property type="project" value="InterPro"/>
</dbReference>
<dbReference type="GO" id="GO:0031720">
    <property type="term" value="F:haptoglobin binding"/>
    <property type="evidence" value="ECO:0007669"/>
    <property type="project" value="TreeGrafter"/>
</dbReference>
<dbReference type="GO" id="GO:0020037">
    <property type="term" value="F:heme binding"/>
    <property type="evidence" value="ECO:0007669"/>
    <property type="project" value="InterPro"/>
</dbReference>
<dbReference type="GO" id="GO:0046872">
    <property type="term" value="F:metal ion binding"/>
    <property type="evidence" value="ECO:0007669"/>
    <property type="project" value="UniProtKB-KW"/>
</dbReference>
<dbReference type="GO" id="GO:0043177">
    <property type="term" value="F:organic acid binding"/>
    <property type="evidence" value="ECO:0007669"/>
    <property type="project" value="TreeGrafter"/>
</dbReference>
<dbReference type="GO" id="GO:0019825">
    <property type="term" value="F:oxygen binding"/>
    <property type="evidence" value="ECO:0007669"/>
    <property type="project" value="InterPro"/>
</dbReference>
<dbReference type="GO" id="GO:0005344">
    <property type="term" value="F:oxygen carrier activity"/>
    <property type="evidence" value="ECO:0007669"/>
    <property type="project" value="UniProtKB-KW"/>
</dbReference>
<dbReference type="GO" id="GO:0004601">
    <property type="term" value="F:peroxidase activity"/>
    <property type="evidence" value="ECO:0007669"/>
    <property type="project" value="TreeGrafter"/>
</dbReference>
<dbReference type="GO" id="GO:0042744">
    <property type="term" value="P:hydrogen peroxide catabolic process"/>
    <property type="evidence" value="ECO:0007669"/>
    <property type="project" value="TreeGrafter"/>
</dbReference>
<dbReference type="CDD" id="cd08927">
    <property type="entry name" value="Hb-alpha-like"/>
    <property type="match status" value="1"/>
</dbReference>
<dbReference type="FunFam" id="1.10.490.10:FF:000002">
    <property type="entry name" value="Hemoglobin subunit alpha"/>
    <property type="match status" value="1"/>
</dbReference>
<dbReference type="Gene3D" id="1.10.490.10">
    <property type="entry name" value="Globins"/>
    <property type="match status" value="1"/>
</dbReference>
<dbReference type="InterPro" id="IPR000971">
    <property type="entry name" value="Globin"/>
</dbReference>
<dbReference type="InterPro" id="IPR009050">
    <property type="entry name" value="Globin-like_sf"/>
</dbReference>
<dbReference type="InterPro" id="IPR012292">
    <property type="entry name" value="Globin/Proto"/>
</dbReference>
<dbReference type="InterPro" id="IPR002338">
    <property type="entry name" value="Hemoglobin_a-typ"/>
</dbReference>
<dbReference type="InterPro" id="IPR050056">
    <property type="entry name" value="Hemoglobin_oxygen_transport"/>
</dbReference>
<dbReference type="PANTHER" id="PTHR11442:SF91">
    <property type="entry name" value="EMBRYONIC ALPHA GLOBIN E1-RELATED"/>
    <property type="match status" value="1"/>
</dbReference>
<dbReference type="PANTHER" id="PTHR11442">
    <property type="entry name" value="HEMOGLOBIN FAMILY MEMBER"/>
    <property type="match status" value="1"/>
</dbReference>
<dbReference type="Pfam" id="PF00042">
    <property type="entry name" value="Globin"/>
    <property type="match status" value="1"/>
</dbReference>
<dbReference type="PRINTS" id="PR00612">
    <property type="entry name" value="ALPHAHAEM"/>
</dbReference>
<dbReference type="SUPFAM" id="SSF46458">
    <property type="entry name" value="Globin-like"/>
    <property type="match status" value="1"/>
</dbReference>
<dbReference type="PROSITE" id="PS01033">
    <property type="entry name" value="GLOBIN"/>
    <property type="match status" value="1"/>
</dbReference>
<name>HBA2_TRENE</name>
<gene>
    <name type="primary">hba2</name>
</gene>
<accession>P45719</accession>
<reference key="1">
    <citation type="journal article" date="1994" name="J. Biol. Chem.">
        <title>Molecular characterization of the functionally distinct hemoglobins of the Antarctic fish Trematomus newnesi.</title>
        <authorList>
            <person name="D'Avino R."/>
            <person name="Caruso C."/>
            <person name="Tamburrini M."/>
            <person name="Romano M."/>
            <person name="Rutigliano B."/>
            <person name="Polverino de Laureto P."/>
            <person name="Camardella L."/>
            <person name="Carratore V."/>
            <person name="di Prisco G."/>
        </authorList>
    </citation>
    <scope>PROTEIN SEQUENCE</scope>
    <scope>ACETYLATION AT SER-1</scope>
    <scope>FUNCTION</scope>
    <scope>SUBUNIT</scope>
</reference>
<evidence type="ECO:0000255" key="1">
    <source>
        <dbReference type="PROSITE-ProRule" id="PRU00238"/>
    </source>
</evidence>
<evidence type="ECO:0000269" key="2">
    <source>
    </source>
</evidence>
<feature type="chain" id="PRO_0000052788" description="Hemoglobin subunit alpha-2">
    <location>
        <begin position="1"/>
        <end position="142"/>
    </location>
</feature>
<feature type="domain" description="Globin" evidence="1">
    <location>
        <begin position="1"/>
        <end position="142"/>
    </location>
</feature>
<feature type="binding site" evidence="1">
    <location>
        <position position="59"/>
    </location>
    <ligand>
        <name>O2</name>
        <dbReference type="ChEBI" id="CHEBI:15379"/>
    </ligand>
</feature>
<feature type="binding site" description="proximal binding residue" evidence="1">
    <location>
        <position position="88"/>
    </location>
    <ligand>
        <name>heme b</name>
        <dbReference type="ChEBI" id="CHEBI:60344"/>
    </ligand>
    <ligandPart>
        <name>Fe</name>
        <dbReference type="ChEBI" id="CHEBI:18248"/>
    </ligandPart>
</feature>
<feature type="modified residue" description="N-acetylserine" evidence="2">
    <location>
        <position position="1"/>
    </location>
</feature>
<protein>
    <recommendedName>
        <fullName>Hemoglobin subunit alpha-2</fullName>
    </recommendedName>
    <alternativeName>
        <fullName>Alpha-2-globin</fullName>
    </alternativeName>
    <alternativeName>
        <fullName>Hemoglobin alpha-2 chain</fullName>
    </alternativeName>
</protein>
<proteinExistence type="evidence at protein level"/>